<reference key="1">
    <citation type="journal article" date="2004" name="Dev. Growth Differ.">
        <title>Disruption of the NCS-1/frequenin-related ncsA gene in Dictyostelium discoideum accelerates development.</title>
        <authorList>
            <person name="Coukell B."/>
            <person name="Cameron A."/>
            <person name="Perusini S."/>
            <person name="Shim K."/>
        </authorList>
    </citation>
    <scope>NUCLEOTIDE SEQUENCE [MRNA]</scope>
    <scope>FUNCTION</scope>
    <scope>CALCIUM-BINDING</scope>
    <scope>DEVELOPMENTAL STAGE</scope>
    <source>
        <strain>AX4</strain>
    </source>
</reference>
<reference key="2">
    <citation type="journal article" date="2002" name="Nature">
        <title>Sequence and analysis of chromosome 2 of Dictyostelium discoideum.</title>
        <authorList>
            <person name="Gloeckner G."/>
            <person name="Eichinger L."/>
            <person name="Szafranski K."/>
            <person name="Pachebat J.A."/>
            <person name="Bankier A.T."/>
            <person name="Dear P.H."/>
            <person name="Lehmann R."/>
            <person name="Baumgart C."/>
            <person name="Parra G."/>
            <person name="Abril J.F."/>
            <person name="Guigo R."/>
            <person name="Kumpf K."/>
            <person name="Tunggal B."/>
            <person name="Cox E.C."/>
            <person name="Quail M.A."/>
            <person name="Platzer M."/>
            <person name="Rosenthal A."/>
            <person name="Noegel A.A."/>
        </authorList>
    </citation>
    <scope>NUCLEOTIDE SEQUENCE [LARGE SCALE GENOMIC DNA]</scope>
    <source>
        <strain>AX4</strain>
    </source>
</reference>
<reference key="3">
    <citation type="journal article" date="2005" name="Nature">
        <title>The genome of the social amoeba Dictyostelium discoideum.</title>
        <authorList>
            <person name="Eichinger L."/>
            <person name="Pachebat J.A."/>
            <person name="Gloeckner G."/>
            <person name="Rajandream M.A."/>
            <person name="Sucgang R."/>
            <person name="Berriman M."/>
            <person name="Song J."/>
            <person name="Olsen R."/>
            <person name="Szafranski K."/>
            <person name="Xu Q."/>
            <person name="Tunggal B."/>
            <person name="Kummerfeld S."/>
            <person name="Madera M."/>
            <person name="Konfortov B.A."/>
            <person name="Rivero F."/>
            <person name="Bankier A.T."/>
            <person name="Lehmann R."/>
            <person name="Hamlin N."/>
            <person name="Davies R."/>
            <person name="Gaudet P."/>
            <person name="Fey P."/>
            <person name="Pilcher K."/>
            <person name="Chen G."/>
            <person name="Saunders D."/>
            <person name="Sodergren E.J."/>
            <person name="Davis P."/>
            <person name="Kerhornou A."/>
            <person name="Nie X."/>
            <person name="Hall N."/>
            <person name="Anjard C."/>
            <person name="Hemphill L."/>
            <person name="Bason N."/>
            <person name="Farbrother P."/>
            <person name="Desany B."/>
            <person name="Just E."/>
            <person name="Morio T."/>
            <person name="Rost R."/>
            <person name="Churcher C.M."/>
            <person name="Cooper J."/>
            <person name="Haydock S."/>
            <person name="van Driessche N."/>
            <person name="Cronin A."/>
            <person name="Goodhead I."/>
            <person name="Muzny D.M."/>
            <person name="Mourier T."/>
            <person name="Pain A."/>
            <person name="Lu M."/>
            <person name="Harper D."/>
            <person name="Lindsay R."/>
            <person name="Hauser H."/>
            <person name="James K.D."/>
            <person name="Quiles M."/>
            <person name="Madan Babu M."/>
            <person name="Saito T."/>
            <person name="Buchrieser C."/>
            <person name="Wardroper A."/>
            <person name="Felder M."/>
            <person name="Thangavelu M."/>
            <person name="Johnson D."/>
            <person name="Knights A."/>
            <person name="Loulseged H."/>
            <person name="Mungall K.L."/>
            <person name="Oliver K."/>
            <person name="Price C."/>
            <person name="Quail M.A."/>
            <person name="Urushihara H."/>
            <person name="Hernandez J."/>
            <person name="Rabbinowitsch E."/>
            <person name="Steffen D."/>
            <person name="Sanders M."/>
            <person name="Ma J."/>
            <person name="Kohara Y."/>
            <person name="Sharp S."/>
            <person name="Simmonds M.N."/>
            <person name="Spiegler S."/>
            <person name="Tivey A."/>
            <person name="Sugano S."/>
            <person name="White B."/>
            <person name="Walker D."/>
            <person name="Woodward J.R."/>
            <person name="Winckler T."/>
            <person name="Tanaka Y."/>
            <person name="Shaulsky G."/>
            <person name="Schleicher M."/>
            <person name="Weinstock G.M."/>
            <person name="Rosenthal A."/>
            <person name="Cox E.C."/>
            <person name="Chisholm R.L."/>
            <person name="Gibbs R.A."/>
            <person name="Loomis W.F."/>
            <person name="Platzer M."/>
            <person name="Kay R.R."/>
            <person name="Williams J.G."/>
            <person name="Dear P.H."/>
            <person name="Noegel A.A."/>
            <person name="Barrell B.G."/>
            <person name="Kuspa A."/>
        </authorList>
    </citation>
    <scope>NUCLEOTIDE SEQUENCE [LARGE SCALE GENOMIC DNA]</scope>
    <source>
        <strain>AX4</strain>
    </source>
</reference>
<evidence type="ECO:0000255" key="1">
    <source>
        <dbReference type="PROSITE-ProRule" id="PRU00448"/>
    </source>
</evidence>
<evidence type="ECO:0000269" key="2">
    <source>
    </source>
</evidence>
<evidence type="ECO:0000305" key="3"/>
<organism>
    <name type="scientific">Dictyostelium discoideum</name>
    <name type="common">Social amoeba</name>
    <dbReference type="NCBI Taxonomy" id="44689"/>
    <lineage>
        <taxon>Eukaryota</taxon>
        <taxon>Amoebozoa</taxon>
        <taxon>Evosea</taxon>
        <taxon>Eumycetozoa</taxon>
        <taxon>Dictyostelia</taxon>
        <taxon>Dictyosteliales</taxon>
        <taxon>Dictyosteliaceae</taxon>
        <taxon>Dictyostelium</taxon>
    </lineage>
</organism>
<feature type="chain" id="PRO_0000323768" description="Calcium-binding protein NCSA">
    <location>
        <begin position="1"/>
        <end position="186"/>
    </location>
</feature>
<feature type="domain" description="EF-hand 1" evidence="1">
    <location>
        <begin position="40"/>
        <end position="58"/>
    </location>
</feature>
<feature type="domain" description="EF-hand 2" evidence="1">
    <location>
        <begin position="66"/>
        <end position="93"/>
    </location>
</feature>
<feature type="domain" description="EF-hand 3" evidence="1">
    <location>
        <begin position="94"/>
        <end position="129"/>
    </location>
</feature>
<feature type="domain" description="EF-hand 4" evidence="1">
    <location>
        <begin position="142"/>
        <end position="177"/>
    </location>
</feature>
<feature type="binding site" evidence="1">
    <location>
        <position position="107"/>
    </location>
    <ligand>
        <name>Ca(2+)</name>
        <dbReference type="ChEBI" id="CHEBI:29108"/>
        <label>1</label>
    </ligand>
</feature>
<feature type="binding site" evidence="1">
    <location>
        <position position="109"/>
    </location>
    <ligand>
        <name>Ca(2+)</name>
        <dbReference type="ChEBI" id="CHEBI:29108"/>
        <label>1</label>
    </ligand>
</feature>
<feature type="binding site" evidence="1">
    <location>
        <position position="111"/>
    </location>
    <ligand>
        <name>Ca(2+)</name>
        <dbReference type="ChEBI" id="CHEBI:29108"/>
        <label>1</label>
    </ligand>
</feature>
<feature type="binding site" evidence="1">
    <location>
        <position position="113"/>
    </location>
    <ligand>
        <name>Ca(2+)</name>
        <dbReference type="ChEBI" id="CHEBI:29108"/>
        <label>1</label>
    </ligand>
</feature>
<feature type="binding site" evidence="1">
    <location>
        <position position="118"/>
    </location>
    <ligand>
        <name>Ca(2+)</name>
        <dbReference type="ChEBI" id="CHEBI:29108"/>
        <label>1</label>
    </ligand>
</feature>
<feature type="binding site" evidence="1">
    <location>
        <position position="155"/>
    </location>
    <ligand>
        <name>Ca(2+)</name>
        <dbReference type="ChEBI" id="CHEBI:29108"/>
        <label>2</label>
    </ligand>
</feature>
<feature type="binding site" evidence="1">
    <location>
        <position position="157"/>
    </location>
    <ligand>
        <name>Ca(2+)</name>
        <dbReference type="ChEBI" id="CHEBI:29108"/>
        <label>2</label>
    </ligand>
</feature>
<feature type="binding site" evidence="1">
    <location>
        <position position="159"/>
    </location>
    <ligand>
        <name>Ca(2+)</name>
        <dbReference type="ChEBI" id="CHEBI:29108"/>
        <label>2</label>
    </ligand>
</feature>
<feature type="binding site" evidence="1">
    <location>
        <position position="161"/>
    </location>
    <ligand>
        <name>Ca(2+)</name>
        <dbReference type="ChEBI" id="CHEBI:29108"/>
        <label>2</label>
    </ligand>
</feature>
<feature type="binding site" evidence="1">
    <location>
        <position position="166"/>
    </location>
    <ligand>
        <name>Ca(2+)</name>
        <dbReference type="ChEBI" id="CHEBI:29108"/>
        <label>2</label>
    </ligand>
</feature>
<feature type="sequence conflict" description="In Ref. 1; AAT72744." evidence="3" ref="1">
    <original>D</original>
    <variation>N</variation>
    <location>
        <position position="64"/>
    </location>
</feature>
<accession>Q75K28</accession>
<accession>Q552Q1</accession>
<proteinExistence type="evidence at protein level"/>
<sequence length="186" mass="21336">MGNQLGTLKKEEVELLQNSSHFDSRELRALYKQFRKDSPSGTINKQEFKEIMTQMGVGDQFLQDLLFNVFDKNKDSTINFQEFVCGLSSITRGTPEEKIEFAFSLYDIDGNGYITRSEMESILESMYKLVGTFVTCSGKKFDPHDLIEEFFDSMDDDGDGYISLEEYKRGTLKNPDIIQGLKLLNQ</sequence>
<gene>
    <name type="primary">ncsA</name>
    <name type="ORF">DDB_G0275931</name>
</gene>
<dbReference type="EMBL" id="AY655128">
    <property type="protein sequence ID" value="AAT72744.1"/>
    <property type="molecule type" value="mRNA"/>
</dbReference>
<dbReference type="EMBL" id="AAFI02000013">
    <property type="protein sequence ID" value="EAL69716.1"/>
    <property type="molecule type" value="Genomic_DNA"/>
</dbReference>
<dbReference type="RefSeq" id="XP_643630.1">
    <property type="nucleotide sequence ID" value="XM_638538.1"/>
</dbReference>
<dbReference type="SMR" id="Q75K28"/>
<dbReference type="FunCoup" id="Q75K28">
    <property type="interactions" value="16"/>
</dbReference>
<dbReference type="STRING" id="44689.Q75K28"/>
<dbReference type="PaxDb" id="44689-DDB0231007"/>
<dbReference type="EnsemblProtists" id="EAL69716">
    <property type="protein sequence ID" value="EAL69716"/>
    <property type="gene ID" value="DDB_G0275931"/>
</dbReference>
<dbReference type="GeneID" id="8620217"/>
<dbReference type="KEGG" id="ddi:DDB_G0275931"/>
<dbReference type="dictyBase" id="DDB_G0275931">
    <property type="gene designation" value="ncsA"/>
</dbReference>
<dbReference type="VEuPathDB" id="AmoebaDB:DDB_G0275931"/>
<dbReference type="eggNOG" id="KOG0044">
    <property type="taxonomic scope" value="Eukaryota"/>
</dbReference>
<dbReference type="HOGENOM" id="CLU_072366_1_0_1"/>
<dbReference type="InParanoid" id="Q75K28"/>
<dbReference type="OMA" id="EYVFNVF"/>
<dbReference type="PhylomeDB" id="Q75K28"/>
<dbReference type="Reactome" id="R-DDI-2514859">
    <property type="pathway name" value="Inactivation, recovery and regulation of the phototransduction cascade"/>
</dbReference>
<dbReference type="PRO" id="PR:Q75K28"/>
<dbReference type="Proteomes" id="UP000002195">
    <property type="component" value="Chromosome 2"/>
</dbReference>
<dbReference type="GO" id="GO:0005509">
    <property type="term" value="F:calcium ion binding"/>
    <property type="evidence" value="ECO:0000314"/>
    <property type="project" value="dictyBase"/>
</dbReference>
<dbReference type="GO" id="GO:0009966">
    <property type="term" value="P:regulation of signal transduction"/>
    <property type="evidence" value="ECO:0000318"/>
    <property type="project" value="GO_Central"/>
</dbReference>
<dbReference type="GO" id="GO:0030587">
    <property type="term" value="P:sorocarp development"/>
    <property type="evidence" value="ECO:0000315"/>
    <property type="project" value="dictyBase"/>
</dbReference>
<dbReference type="CDD" id="cd00051">
    <property type="entry name" value="EFh"/>
    <property type="match status" value="3"/>
</dbReference>
<dbReference type="FunFam" id="1.10.238.10:FF:000009">
    <property type="entry name" value="Visinin-like protein 1"/>
    <property type="match status" value="1"/>
</dbReference>
<dbReference type="Gene3D" id="1.10.238.10">
    <property type="entry name" value="EF-hand"/>
    <property type="match status" value="1"/>
</dbReference>
<dbReference type="InterPro" id="IPR011992">
    <property type="entry name" value="EF-hand-dom_pair"/>
</dbReference>
<dbReference type="InterPro" id="IPR018247">
    <property type="entry name" value="EF_Hand_1_Ca_BS"/>
</dbReference>
<dbReference type="InterPro" id="IPR002048">
    <property type="entry name" value="EF_hand_dom"/>
</dbReference>
<dbReference type="InterPro" id="IPR028846">
    <property type="entry name" value="Recoverin"/>
</dbReference>
<dbReference type="PANTHER" id="PTHR23055">
    <property type="entry name" value="CALCIUM BINDING PROTEINS"/>
    <property type="match status" value="1"/>
</dbReference>
<dbReference type="PANTHER" id="PTHR23055:SF189">
    <property type="entry name" value="CALCIUM-BINDING PROTEIN NCSA"/>
    <property type="match status" value="1"/>
</dbReference>
<dbReference type="Pfam" id="PF13499">
    <property type="entry name" value="EF-hand_7"/>
    <property type="match status" value="1"/>
</dbReference>
<dbReference type="Pfam" id="PF13833">
    <property type="entry name" value="EF-hand_8"/>
    <property type="match status" value="1"/>
</dbReference>
<dbReference type="PRINTS" id="PR00450">
    <property type="entry name" value="RECOVERIN"/>
</dbReference>
<dbReference type="SMART" id="SM00054">
    <property type="entry name" value="EFh"/>
    <property type="match status" value="4"/>
</dbReference>
<dbReference type="SUPFAM" id="SSF47473">
    <property type="entry name" value="EF-hand"/>
    <property type="match status" value="1"/>
</dbReference>
<dbReference type="PROSITE" id="PS00018">
    <property type="entry name" value="EF_HAND_1"/>
    <property type="match status" value="2"/>
</dbReference>
<dbReference type="PROSITE" id="PS50222">
    <property type="entry name" value="EF_HAND_2"/>
    <property type="match status" value="4"/>
</dbReference>
<keyword id="KW-0106">Calcium</keyword>
<keyword id="KW-0217">Developmental protein</keyword>
<keyword id="KW-0479">Metal-binding</keyword>
<keyword id="KW-1185">Reference proteome</keyword>
<keyword id="KW-0677">Repeat</keyword>
<name>NCSA_DICDI</name>
<comment type="function">
    <text evidence="2">May prevent cells from entering development prematurely in the presence of environmental nutrients.</text>
</comment>
<comment type="developmental stage">
    <text evidence="2">Expression peaks during late aggregation and slug stage.</text>
</comment>
<comment type="similarity">
    <text evidence="3">Belongs to the recoverin family.</text>
</comment>
<protein>
    <recommendedName>
        <fullName>Calcium-binding protein NCSA</fullName>
    </recommendedName>
    <alternativeName>
        <fullName>Neuronal calcium sensor 1 homolog</fullName>
    </alternativeName>
</protein>